<reference key="1">
    <citation type="journal article" date="2004" name="Nature">
        <title>Genome evolution in yeasts.</title>
        <authorList>
            <person name="Dujon B."/>
            <person name="Sherman D."/>
            <person name="Fischer G."/>
            <person name="Durrens P."/>
            <person name="Casaregola S."/>
            <person name="Lafontaine I."/>
            <person name="de Montigny J."/>
            <person name="Marck C."/>
            <person name="Neuveglise C."/>
            <person name="Talla E."/>
            <person name="Goffard N."/>
            <person name="Frangeul L."/>
            <person name="Aigle M."/>
            <person name="Anthouard V."/>
            <person name="Babour A."/>
            <person name="Barbe V."/>
            <person name="Barnay S."/>
            <person name="Blanchin S."/>
            <person name="Beckerich J.-M."/>
            <person name="Beyne E."/>
            <person name="Bleykasten C."/>
            <person name="Boisrame A."/>
            <person name="Boyer J."/>
            <person name="Cattolico L."/>
            <person name="Confanioleri F."/>
            <person name="de Daruvar A."/>
            <person name="Despons L."/>
            <person name="Fabre E."/>
            <person name="Fairhead C."/>
            <person name="Ferry-Dumazet H."/>
            <person name="Groppi A."/>
            <person name="Hantraye F."/>
            <person name="Hennequin C."/>
            <person name="Jauniaux N."/>
            <person name="Joyet P."/>
            <person name="Kachouri R."/>
            <person name="Kerrest A."/>
            <person name="Koszul R."/>
            <person name="Lemaire M."/>
            <person name="Lesur I."/>
            <person name="Ma L."/>
            <person name="Muller H."/>
            <person name="Nicaud J.-M."/>
            <person name="Nikolski M."/>
            <person name="Oztas S."/>
            <person name="Ozier-Kalogeropoulos O."/>
            <person name="Pellenz S."/>
            <person name="Potier S."/>
            <person name="Richard G.-F."/>
            <person name="Straub M.-L."/>
            <person name="Suleau A."/>
            <person name="Swennen D."/>
            <person name="Tekaia F."/>
            <person name="Wesolowski-Louvel M."/>
            <person name="Westhof E."/>
            <person name="Wirth B."/>
            <person name="Zeniou-Meyer M."/>
            <person name="Zivanovic Y."/>
            <person name="Bolotin-Fukuhara M."/>
            <person name="Thierry A."/>
            <person name="Bouchier C."/>
            <person name="Caudron B."/>
            <person name="Scarpelli C."/>
            <person name="Gaillardin C."/>
            <person name="Weissenbach J."/>
            <person name="Wincker P."/>
            <person name="Souciet J.-L."/>
        </authorList>
    </citation>
    <scope>NUCLEOTIDE SEQUENCE [LARGE SCALE GENOMIC DNA]</scope>
    <source>
        <strain>CLIB 122 / E 150</strain>
    </source>
</reference>
<protein>
    <recommendedName>
        <fullName>Putative GPI inositol-deacylase C</fullName>
        <ecNumber>3.1.-.-</ecNumber>
    </recommendedName>
</protein>
<keyword id="KW-0256">Endoplasmic reticulum</keyword>
<keyword id="KW-0325">Glycoprotein</keyword>
<keyword id="KW-0378">Hydrolase</keyword>
<keyword id="KW-0472">Membrane</keyword>
<keyword id="KW-0653">Protein transport</keyword>
<keyword id="KW-1185">Reference proteome</keyword>
<keyword id="KW-0812">Transmembrane</keyword>
<keyword id="KW-1133">Transmembrane helix</keyword>
<keyword id="KW-0813">Transport</keyword>
<gene>
    <name type="primary">BST1C</name>
    <name type="ordered locus">YALI0B10043g</name>
</gene>
<proteinExistence type="inferred from homology"/>
<feature type="chain" id="PRO_0000277646" description="Putative GPI inositol-deacylase C">
    <location>
        <begin position="1"/>
        <end position="833"/>
    </location>
</feature>
<feature type="transmembrane region" description="Helical" evidence="2">
    <location>
        <begin position="521"/>
        <end position="541"/>
    </location>
</feature>
<feature type="transmembrane region" description="Helical" evidence="2">
    <location>
        <begin position="560"/>
        <end position="580"/>
    </location>
</feature>
<feature type="transmembrane region" description="Helical" evidence="2">
    <location>
        <begin position="617"/>
        <end position="637"/>
    </location>
</feature>
<feature type="transmembrane region" description="Helical" evidence="2">
    <location>
        <begin position="672"/>
        <end position="692"/>
    </location>
</feature>
<feature type="transmembrane region" description="Helical" evidence="2">
    <location>
        <begin position="723"/>
        <end position="743"/>
    </location>
</feature>
<feature type="transmembrane region" description="Helical" evidence="2">
    <location>
        <begin position="787"/>
        <end position="807"/>
    </location>
</feature>
<feature type="active site" evidence="1">
    <location>
        <position position="130"/>
    </location>
</feature>
<feature type="glycosylation site" description="N-linked (GlcNAc...) asparagine" evidence="2">
    <location>
        <position position="191"/>
    </location>
</feature>
<feature type="glycosylation site" description="N-linked (GlcNAc...) asparagine" evidence="2">
    <location>
        <position position="456"/>
    </location>
</feature>
<feature type="glycosylation site" description="N-linked (GlcNAc...) asparagine" evidence="2">
    <location>
        <position position="772"/>
    </location>
</feature>
<dbReference type="EC" id="3.1.-.-"/>
<dbReference type="EMBL" id="CR382128">
    <property type="protein sequence ID" value="CAG82947.1"/>
    <property type="molecule type" value="Genomic_DNA"/>
</dbReference>
<dbReference type="RefSeq" id="XP_500702.1">
    <property type="nucleotide sequence ID" value="XM_500702.1"/>
</dbReference>
<dbReference type="SMR" id="Q6CF60"/>
<dbReference type="FunCoup" id="Q6CF60">
    <property type="interactions" value="51"/>
</dbReference>
<dbReference type="STRING" id="284591.Q6CF60"/>
<dbReference type="ESTHER" id="yarli-q6cf60">
    <property type="family name" value="PGAP1"/>
</dbReference>
<dbReference type="GlyCosmos" id="Q6CF60">
    <property type="glycosylation" value="3 sites, No reported glycans"/>
</dbReference>
<dbReference type="EnsemblFungi" id="CAG82947">
    <property type="protein sequence ID" value="CAG82947"/>
    <property type="gene ID" value="YALI0_B10043g"/>
</dbReference>
<dbReference type="KEGG" id="yli:2906919"/>
<dbReference type="VEuPathDB" id="FungiDB:YALI0_B10043g"/>
<dbReference type="HOGENOM" id="CLU_006103_0_0_1"/>
<dbReference type="InParanoid" id="Q6CF60"/>
<dbReference type="OMA" id="NEFWHEA"/>
<dbReference type="OrthoDB" id="126152at4891"/>
<dbReference type="Proteomes" id="UP000001300">
    <property type="component" value="Chromosome B"/>
</dbReference>
<dbReference type="GO" id="GO:0005783">
    <property type="term" value="C:endoplasmic reticulum"/>
    <property type="evidence" value="ECO:0000318"/>
    <property type="project" value="GO_Central"/>
</dbReference>
<dbReference type="GO" id="GO:0005789">
    <property type="term" value="C:endoplasmic reticulum membrane"/>
    <property type="evidence" value="ECO:0007669"/>
    <property type="project" value="UniProtKB-SubCell"/>
</dbReference>
<dbReference type="GO" id="GO:0050185">
    <property type="term" value="F:phosphatidylinositol deacylase activity"/>
    <property type="evidence" value="ECO:0000318"/>
    <property type="project" value="GO_Central"/>
</dbReference>
<dbReference type="GO" id="GO:0006506">
    <property type="term" value="P:GPI anchor biosynthetic process"/>
    <property type="evidence" value="ECO:0000318"/>
    <property type="project" value="GO_Central"/>
</dbReference>
<dbReference type="GO" id="GO:0015031">
    <property type="term" value="P:protein transport"/>
    <property type="evidence" value="ECO:0007669"/>
    <property type="project" value="UniProtKB-KW"/>
</dbReference>
<dbReference type="Gene3D" id="3.40.50.1820">
    <property type="entry name" value="alpha/beta hydrolase"/>
    <property type="match status" value="1"/>
</dbReference>
<dbReference type="InterPro" id="IPR029058">
    <property type="entry name" value="AB_hydrolase_fold"/>
</dbReference>
<dbReference type="InterPro" id="IPR012908">
    <property type="entry name" value="PGAP1-ab_dom-like"/>
</dbReference>
<dbReference type="InterPro" id="IPR039529">
    <property type="entry name" value="PGAP1/BST1"/>
</dbReference>
<dbReference type="InterPro" id="IPR056824">
    <property type="entry name" value="PGAP1_TMD"/>
</dbReference>
<dbReference type="PANTHER" id="PTHR15495:SF7">
    <property type="entry name" value="GPI INOSITOL-DEACYLASE"/>
    <property type="match status" value="1"/>
</dbReference>
<dbReference type="PANTHER" id="PTHR15495">
    <property type="entry name" value="NEGATIVE REGULATOR OF VESICLE FORMATION-RELATED"/>
    <property type="match status" value="1"/>
</dbReference>
<dbReference type="Pfam" id="PF07819">
    <property type="entry name" value="PGAP1"/>
    <property type="match status" value="1"/>
</dbReference>
<dbReference type="Pfam" id="PF25140">
    <property type="entry name" value="PGAP1_TMD"/>
    <property type="match status" value="1"/>
</dbReference>
<dbReference type="SUPFAM" id="SSF53474">
    <property type="entry name" value="alpha/beta-Hydrolases"/>
    <property type="match status" value="1"/>
</dbReference>
<dbReference type="PROSITE" id="PS00120">
    <property type="entry name" value="LIPASE_SER"/>
    <property type="match status" value="1"/>
</dbReference>
<comment type="function">
    <text evidence="1">Involved in inositol deacylation of GPI-anchored proteins which plays important roles in the quality control and ER-associated degradation of GPI-anchored proteins.</text>
</comment>
<comment type="subcellular location">
    <subcellularLocation>
        <location evidence="1">Endoplasmic reticulum membrane</location>
        <topology evidence="1">Multi-pass membrane protein</topology>
    </subcellularLocation>
</comment>
<comment type="miscellaneous">
    <text>Lacks the C- and N-terminal parts of classical GPI inositol-deacylases and may not have GPI inositol-deacylase activity.</text>
</comment>
<comment type="similarity">
    <text evidence="3">Belongs to the GPI inositol-deacylase family.</text>
</comment>
<evidence type="ECO:0000250" key="1"/>
<evidence type="ECO:0000255" key="2"/>
<evidence type="ECO:0000305" key="3"/>
<accession>Q6CF60</accession>
<name>BST1C_YARLI</name>
<sequence length="833" mass="92665">MWVAYSPIEGLTTEHSRLAEKYSLYLVKSTPYDIPLPVRPSGVPVLFVPGNAGSYRQIRSISDTCRELNEQYGGSEIDFFALDFNEAYSALHGRTLLDQAEYLNDAINYILQMYRDNGKDVSSVMLLGHSMGGVVSRLAISLDNYKPGTVTTIFTLASPHLVPPATFDGDIQKVYNRMNDFWRSNYADSDNNSLSDMTVLSIAGGKRDTMVPSDYISLDSVVPSSHGLSTFSNSINRVWTGIDHDAMMWCHQLRRQIAIALMNVIDRDVNGRMEVFRKVFSGTQTLSDAEEDFEDVEVTPVKHGLHQKLESGWYYGENVQVMTTHTVNQESAFESYEMSSGSLLRAFECRSKSGSSFKGCRKIFPLLVPGSNDAVIAFAETEHYLLLDVSSSSDWISIDQVSQKSASFDFVTGATISTSNTISTDISFPKLTSGLVSYKVSVSKGVQLVRQYVQQNSSRVYDSKYLVPHNGVVDVSFHGDVPFVPYFQSSPLHLQVFGGGHVTIRVDWIGSLGNLFMRYRILFISLPSAILYAIFLVQFHAGTARFLSLRQSTSIFINRYLLTSCLAGSGIAYLTGLSQVRDFLHLIQIPITKTFAVDPSYTKNDLFLGLSGVSGTVLAPIFTVFSTGMVVLITELVMGLTSLLSFCFKSTTTAQSESESGDPISDLLHKRTVFVAVISVLVLLFFPYQLAFTLATVALLVMTAYFKSNKAPQEQSFNNYISTICVLMTWTCIINAPVLAVWIQGIVVQRSMTFSSHHNLVSILPTLLFVENLSFRRIPSGSSITSLLLAYTSLHCLFYGMMQAFMIHHGFNLLATWLLCMSYKKVFFKSKHE</sequence>
<organism>
    <name type="scientific">Yarrowia lipolytica (strain CLIB 122 / E 150)</name>
    <name type="common">Yeast</name>
    <name type="synonym">Candida lipolytica</name>
    <dbReference type="NCBI Taxonomy" id="284591"/>
    <lineage>
        <taxon>Eukaryota</taxon>
        <taxon>Fungi</taxon>
        <taxon>Dikarya</taxon>
        <taxon>Ascomycota</taxon>
        <taxon>Saccharomycotina</taxon>
        <taxon>Dipodascomycetes</taxon>
        <taxon>Dipodascales</taxon>
        <taxon>Dipodascales incertae sedis</taxon>
        <taxon>Yarrowia</taxon>
    </lineage>
</organism>